<reference key="1">
    <citation type="journal article" date="2009" name="PLoS ONE">
        <title>Salmonella paratyphi C: genetic divergence from Salmonella choleraesuis and pathogenic convergence with Salmonella typhi.</title>
        <authorList>
            <person name="Liu W.-Q."/>
            <person name="Feng Y."/>
            <person name="Wang Y."/>
            <person name="Zou Q.-H."/>
            <person name="Chen F."/>
            <person name="Guo J.-T."/>
            <person name="Peng Y.-H."/>
            <person name="Jin Y."/>
            <person name="Li Y.-G."/>
            <person name="Hu S.-N."/>
            <person name="Johnston R.N."/>
            <person name="Liu G.-R."/>
            <person name="Liu S.-L."/>
        </authorList>
    </citation>
    <scope>NUCLEOTIDE SEQUENCE [LARGE SCALE GENOMIC DNA]</scope>
    <source>
        <strain>RKS4594</strain>
    </source>
</reference>
<feature type="chain" id="PRO_1000147970" description="Glycine dehydrogenase (decarboxylating)">
    <location>
        <begin position="1"/>
        <end position="957"/>
    </location>
</feature>
<feature type="modified residue" description="N6-(pyridoxal phosphate)lysine" evidence="1">
    <location>
        <position position="708"/>
    </location>
</feature>
<keyword id="KW-0560">Oxidoreductase</keyword>
<keyword id="KW-0663">Pyridoxal phosphate</keyword>
<sequence>MTQTLSQLENRGAFIERHIGPDAAQQQEMLNAVGAESLNALTGQIVPKDIQLATPPQVGEAATEYAALAELKAIAGRNKRFTSYIGMGYTAVQLPPVILRNMLENPGWYTAYTPYQPEVSQGRLEALLNFQQVTLDLTGLDMASASLLDEATAAAEAMAMAKRVSKLKNANRFFVASDVHPQTLDVVRTRAETFGFDVIVDDAAKALDHQDVFGVLLQQVGTTGEIHDYSALITELKSRKVVVSVAADFMALVLLTAPGKQGADIVFGSAQRFGVPMGYGGPHAAFFAAKDEFKRSMPGRIIGVSKDAAGNTALRMAMQTREQHIRREKANSNICTSQVLLANIASLYAVYHGPVGLKRIANRIHRLTDILAAGLQQKGLKLRHAHYFDTLCVEVADKAAVLARAEAAEINLRSDIHNAVGITLDETTTRENVAQLFNVLLGDSHGLNIETLDKDVALDSRSIQQSMLRDDAILTHPVFNRYHSETEMMRYMHSLERKDLALNQAMIPLGSCTMKLNAAAEMIPITWPEFAELHPFCPPEQAEGYHQMISQLSDWLVKLTGYDAVCMQPNSGAQGEYAGLLAIRHYHESRNEGHRDICLIPASAHGTNPASAHMAGMQVVVVACDKNGNIDLDDLRAKAEQHAANLSCIMVTYPSTHGVYEETIREVCEVVHQFGGQVYLDGANMNAQVGITSPGFIGADVSHLNLHKTFCIPHGGGGPGMGPIGVKAHLAPFVPGHSVVQIEGMLTRQGAVSAAPFGSASILPISWMYIRMMGAEGLKQASQVAILNANYIASRLKDAYPVLYTGRDGRVAHECILDIRPLKEETGISELDIAKRLIDYGFHAPTMSFPVAGTLMVEPTESEGKAELDRFIDAMLAIRAEIDQVKAGVWPLEDNPLVNAPHIQSELVAEWAHPYSREVAVFPAGVADKYWPTVKRLDDVYGDRNLFCSCVPISDYQ</sequence>
<gene>
    <name evidence="1" type="primary">gcvP</name>
    <name type="ordered locus">SPC_3113</name>
</gene>
<accession>C0PY26</accession>
<dbReference type="EC" id="1.4.4.2" evidence="1"/>
<dbReference type="EMBL" id="CP000857">
    <property type="protein sequence ID" value="ACN47200.1"/>
    <property type="molecule type" value="Genomic_DNA"/>
</dbReference>
<dbReference type="RefSeq" id="WP_000194975.1">
    <property type="nucleotide sequence ID" value="NC_012125.1"/>
</dbReference>
<dbReference type="SMR" id="C0PY26"/>
<dbReference type="KEGG" id="sei:SPC_3113"/>
<dbReference type="HOGENOM" id="CLU_004620_3_2_6"/>
<dbReference type="Proteomes" id="UP000001599">
    <property type="component" value="Chromosome"/>
</dbReference>
<dbReference type="GO" id="GO:0005829">
    <property type="term" value="C:cytosol"/>
    <property type="evidence" value="ECO:0007669"/>
    <property type="project" value="TreeGrafter"/>
</dbReference>
<dbReference type="GO" id="GO:0005960">
    <property type="term" value="C:glycine cleavage complex"/>
    <property type="evidence" value="ECO:0007669"/>
    <property type="project" value="TreeGrafter"/>
</dbReference>
<dbReference type="GO" id="GO:0016594">
    <property type="term" value="F:glycine binding"/>
    <property type="evidence" value="ECO:0007669"/>
    <property type="project" value="TreeGrafter"/>
</dbReference>
<dbReference type="GO" id="GO:0004375">
    <property type="term" value="F:glycine dehydrogenase (decarboxylating) activity"/>
    <property type="evidence" value="ECO:0007669"/>
    <property type="project" value="UniProtKB-EC"/>
</dbReference>
<dbReference type="GO" id="GO:0030170">
    <property type="term" value="F:pyridoxal phosphate binding"/>
    <property type="evidence" value="ECO:0007669"/>
    <property type="project" value="TreeGrafter"/>
</dbReference>
<dbReference type="GO" id="GO:0019464">
    <property type="term" value="P:glycine decarboxylation via glycine cleavage system"/>
    <property type="evidence" value="ECO:0007669"/>
    <property type="project" value="UniProtKB-UniRule"/>
</dbReference>
<dbReference type="CDD" id="cd00613">
    <property type="entry name" value="GDC-P"/>
    <property type="match status" value="2"/>
</dbReference>
<dbReference type="FunFam" id="3.40.640.10:FF:000005">
    <property type="entry name" value="Glycine dehydrogenase (decarboxylating), mitochondrial"/>
    <property type="match status" value="1"/>
</dbReference>
<dbReference type="FunFam" id="3.90.1150.10:FF:000007">
    <property type="entry name" value="Glycine dehydrogenase (decarboxylating), mitochondrial"/>
    <property type="match status" value="1"/>
</dbReference>
<dbReference type="FunFam" id="3.40.640.10:FF:000007">
    <property type="entry name" value="glycine dehydrogenase (Decarboxylating), mitochondrial"/>
    <property type="match status" value="1"/>
</dbReference>
<dbReference type="Gene3D" id="3.90.1150.10">
    <property type="entry name" value="Aspartate Aminotransferase, domain 1"/>
    <property type="match status" value="1"/>
</dbReference>
<dbReference type="Gene3D" id="3.40.640.10">
    <property type="entry name" value="Type I PLP-dependent aspartate aminotransferase-like (Major domain)"/>
    <property type="match status" value="2"/>
</dbReference>
<dbReference type="HAMAP" id="MF_00711">
    <property type="entry name" value="GcvP"/>
    <property type="match status" value="1"/>
</dbReference>
<dbReference type="InterPro" id="IPR003437">
    <property type="entry name" value="GcvP"/>
</dbReference>
<dbReference type="InterPro" id="IPR049316">
    <property type="entry name" value="GDC-P_C"/>
</dbReference>
<dbReference type="InterPro" id="IPR049315">
    <property type="entry name" value="GDC-P_N"/>
</dbReference>
<dbReference type="InterPro" id="IPR020581">
    <property type="entry name" value="GDC_P"/>
</dbReference>
<dbReference type="InterPro" id="IPR015424">
    <property type="entry name" value="PyrdxlP-dep_Trfase"/>
</dbReference>
<dbReference type="InterPro" id="IPR015421">
    <property type="entry name" value="PyrdxlP-dep_Trfase_major"/>
</dbReference>
<dbReference type="InterPro" id="IPR015422">
    <property type="entry name" value="PyrdxlP-dep_Trfase_small"/>
</dbReference>
<dbReference type="NCBIfam" id="TIGR00461">
    <property type="entry name" value="gcvP"/>
    <property type="match status" value="1"/>
</dbReference>
<dbReference type="NCBIfam" id="NF003346">
    <property type="entry name" value="PRK04366.1"/>
    <property type="match status" value="1"/>
</dbReference>
<dbReference type="PANTHER" id="PTHR11773:SF13">
    <property type="entry name" value="GLYCINE DEHYDROGENASE (DECARBOXYLATING)"/>
    <property type="match status" value="1"/>
</dbReference>
<dbReference type="PANTHER" id="PTHR11773">
    <property type="entry name" value="GLYCINE DEHYDROGENASE, DECARBOXYLATING"/>
    <property type="match status" value="1"/>
</dbReference>
<dbReference type="Pfam" id="PF21478">
    <property type="entry name" value="GcvP2_C"/>
    <property type="match status" value="1"/>
</dbReference>
<dbReference type="Pfam" id="PF02347">
    <property type="entry name" value="GDC-P"/>
    <property type="match status" value="2"/>
</dbReference>
<dbReference type="SUPFAM" id="SSF53383">
    <property type="entry name" value="PLP-dependent transferases"/>
    <property type="match status" value="2"/>
</dbReference>
<comment type="function">
    <text evidence="1">The glycine cleavage system catalyzes the degradation of glycine. The P protein binds the alpha-amino group of glycine through its pyridoxal phosphate cofactor; CO(2) is released and the remaining methylamine moiety is then transferred to the lipoamide cofactor of the H protein.</text>
</comment>
<comment type="catalytic activity">
    <reaction evidence="1">
        <text>N(6)-[(R)-lipoyl]-L-lysyl-[glycine-cleavage complex H protein] + glycine + H(+) = N(6)-[(R)-S(8)-aminomethyldihydrolipoyl]-L-lysyl-[glycine-cleavage complex H protein] + CO2</text>
        <dbReference type="Rhea" id="RHEA:24304"/>
        <dbReference type="Rhea" id="RHEA-COMP:10494"/>
        <dbReference type="Rhea" id="RHEA-COMP:10495"/>
        <dbReference type="ChEBI" id="CHEBI:15378"/>
        <dbReference type="ChEBI" id="CHEBI:16526"/>
        <dbReference type="ChEBI" id="CHEBI:57305"/>
        <dbReference type="ChEBI" id="CHEBI:83099"/>
        <dbReference type="ChEBI" id="CHEBI:83143"/>
        <dbReference type="EC" id="1.4.4.2"/>
    </reaction>
</comment>
<comment type="cofactor">
    <cofactor evidence="1">
        <name>pyridoxal 5'-phosphate</name>
        <dbReference type="ChEBI" id="CHEBI:597326"/>
    </cofactor>
</comment>
<comment type="subunit">
    <text evidence="1">The glycine cleavage system is composed of four proteins: P, T, L and H.</text>
</comment>
<comment type="similarity">
    <text evidence="1">Belongs to the GcvP family.</text>
</comment>
<name>GCSP_SALPC</name>
<proteinExistence type="inferred from homology"/>
<evidence type="ECO:0000255" key="1">
    <source>
        <dbReference type="HAMAP-Rule" id="MF_00711"/>
    </source>
</evidence>
<organism>
    <name type="scientific">Salmonella paratyphi C (strain RKS4594)</name>
    <dbReference type="NCBI Taxonomy" id="476213"/>
    <lineage>
        <taxon>Bacteria</taxon>
        <taxon>Pseudomonadati</taxon>
        <taxon>Pseudomonadota</taxon>
        <taxon>Gammaproteobacteria</taxon>
        <taxon>Enterobacterales</taxon>
        <taxon>Enterobacteriaceae</taxon>
        <taxon>Salmonella</taxon>
    </lineage>
</organism>
<protein>
    <recommendedName>
        <fullName evidence="1">Glycine dehydrogenase (decarboxylating)</fullName>
        <ecNumber evidence="1">1.4.4.2</ecNumber>
    </recommendedName>
    <alternativeName>
        <fullName evidence="1">Glycine cleavage system P-protein</fullName>
    </alternativeName>
    <alternativeName>
        <fullName evidence="1">Glycine decarboxylase</fullName>
    </alternativeName>
    <alternativeName>
        <fullName evidence="1">Glycine dehydrogenase (aminomethyl-transferring)</fullName>
    </alternativeName>
</protein>